<gene>
    <name type="primary">Mgmt</name>
</gene>
<proteinExistence type="evidence at protein level"/>
<protein>
    <recommendedName>
        <fullName>Methylated-DNA--protein-cysteine methyltransferase</fullName>
        <ecNumber>2.1.1.63</ecNumber>
    </recommendedName>
    <alternativeName>
        <fullName>6-O-methylguanine-DNA methyltransferase</fullName>
        <shortName>MGMT</shortName>
    </alternativeName>
    <alternativeName>
        <fullName>O-6-methylguanine-DNA-alkyltransferase</fullName>
    </alternativeName>
</protein>
<feature type="chain" id="PRO_0000139361" description="Methylated-DNA--protein-cysteine methyltransferase">
    <location>
        <begin position="1"/>
        <end position="209"/>
    </location>
</feature>
<feature type="active site" description="Nucleophile; methyl group acceptor" evidence="3">
    <location>
        <position position="149"/>
    </location>
</feature>
<feature type="binding site" evidence="1">
    <location>
        <position position="5"/>
    </location>
    <ligand>
        <name>Zn(2+)</name>
        <dbReference type="ChEBI" id="CHEBI:29105"/>
    </ligand>
</feature>
<feature type="binding site" evidence="1">
    <location>
        <position position="24"/>
    </location>
    <ligand>
        <name>Zn(2+)</name>
        <dbReference type="ChEBI" id="CHEBI:29105"/>
    </ligand>
</feature>
<feature type="binding site" evidence="1">
    <location>
        <position position="29"/>
    </location>
    <ligand>
        <name>Zn(2+)</name>
        <dbReference type="ChEBI" id="CHEBI:29105"/>
    </ligand>
</feature>
<feature type="binding site" evidence="1">
    <location>
        <position position="89"/>
    </location>
    <ligand>
        <name>Zn(2+)</name>
        <dbReference type="ChEBI" id="CHEBI:29105"/>
    </ligand>
</feature>
<feature type="binding site" evidence="1">
    <location>
        <position position="99"/>
    </location>
    <ligand>
        <name>DNA</name>
        <dbReference type="ChEBI" id="CHEBI:16991"/>
    </ligand>
</feature>
<feature type="binding site" evidence="1">
    <location>
        <position position="118"/>
    </location>
    <ligand>
        <name>DNA</name>
        <dbReference type="ChEBI" id="CHEBI:16991"/>
    </ligand>
</feature>
<feature type="binding site" evidence="1">
    <location>
        <position position="119"/>
    </location>
    <ligand>
        <name>DNA</name>
        <dbReference type="ChEBI" id="CHEBI:16991"/>
    </ligand>
</feature>
<feature type="binding site" evidence="1">
    <location>
        <position position="127"/>
    </location>
    <ligand>
        <name>DNA</name>
        <dbReference type="ChEBI" id="CHEBI:16991"/>
    </ligand>
</feature>
<feature type="binding site" evidence="1">
    <location>
        <position position="132"/>
    </location>
    <ligand>
        <name>DNA</name>
        <dbReference type="ChEBI" id="CHEBI:16991"/>
    </ligand>
</feature>
<feature type="binding site" evidence="1">
    <location>
        <position position="155"/>
    </location>
    <ligand>
        <name>DNA</name>
        <dbReference type="ChEBI" id="CHEBI:16991"/>
    </ligand>
</feature>
<feature type="modified residue" description="Phosphoserine" evidence="2">
    <location>
        <position position="14"/>
    </location>
</feature>
<accession>P24528</accession>
<comment type="function">
    <text>Involved in the cellular defense against the biological effects of O6-methylguanine (O6-MeG) and O4-methylthymine (O4-MeT) in DNA. Repairs the methylated nucleobase in DNA by stoichiometrically transferring the methyl group to a cysteine residue in the enzyme. This is a suicide reaction: the enzyme is irreversibly inactivated.</text>
</comment>
<comment type="catalytic activity">
    <reaction evidence="3">
        <text>a 6-O-methyl-2'-deoxyguanosine in DNA + L-cysteinyl-[protein] = S-methyl-L-cysteinyl-[protein] + a 2'-deoxyguanosine in DNA</text>
        <dbReference type="Rhea" id="RHEA:24000"/>
        <dbReference type="Rhea" id="RHEA-COMP:10131"/>
        <dbReference type="Rhea" id="RHEA-COMP:10132"/>
        <dbReference type="Rhea" id="RHEA-COMP:11367"/>
        <dbReference type="Rhea" id="RHEA-COMP:11368"/>
        <dbReference type="ChEBI" id="CHEBI:29950"/>
        <dbReference type="ChEBI" id="CHEBI:82612"/>
        <dbReference type="ChEBI" id="CHEBI:85445"/>
        <dbReference type="ChEBI" id="CHEBI:85448"/>
        <dbReference type="EC" id="2.1.1.63"/>
    </reaction>
</comment>
<comment type="catalytic activity">
    <reaction evidence="3">
        <text>a 4-O-methyl-thymidine in DNA + L-cysteinyl-[protein] = a thymidine in DNA + S-methyl-L-cysteinyl-[protein]</text>
        <dbReference type="Rhea" id="RHEA:53428"/>
        <dbReference type="Rhea" id="RHEA-COMP:10131"/>
        <dbReference type="Rhea" id="RHEA-COMP:10132"/>
        <dbReference type="Rhea" id="RHEA-COMP:13555"/>
        <dbReference type="Rhea" id="RHEA-COMP:13556"/>
        <dbReference type="ChEBI" id="CHEBI:29950"/>
        <dbReference type="ChEBI" id="CHEBI:82612"/>
        <dbReference type="ChEBI" id="CHEBI:137386"/>
        <dbReference type="ChEBI" id="CHEBI:137387"/>
        <dbReference type="EC" id="2.1.1.63"/>
    </reaction>
</comment>
<comment type="cofactor">
    <cofactor evidence="1">
        <name>Zn(2+)</name>
        <dbReference type="ChEBI" id="CHEBI:29105"/>
    </cofactor>
    <text evidence="1">Binds 1 zinc ion.</text>
</comment>
<comment type="subcellular location">
    <subcellularLocation>
        <location evidence="4">Nucleus</location>
    </subcellularLocation>
</comment>
<comment type="miscellaneous">
    <text>This enzyme catalyzes only one turnover and therefore is not strictly catalytic. According to one definition, an enzyme is a biocatalyst that acts repeatedly and over many reaction cycles.</text>
</comment>
<comment type="similarity">
    <text evidence="4">Belongs to the MGMT family.</text>
</comment>
<sequence length="209" mass="22244">MAEICKMKYTVLDSPLGKIELSGCERGLHGIRFLSGKTPNTDPTEAPACPEVLGGPEGVPEPLVQCTAWLEAYFHEPAATEGLPLPALHHPVFQQDSFTRQVLWKLLKVVKFGEMVSYQQLAALAGNPKAARAVGGAMRSNPVPILIPCHRVIRSDGAIGNYSGGGQTVKEWLLAHEGIPTGQPASKGLGLIGSWLKPSFESSSPKPSG</sequence>
<dbReference type="EC" id="2.1.1.63"/>
<dbReference type="EMBL" id="S61804">
    <property type="protein sequence ID" value="AAB20187.1"/>
    <property type="molecule type" value="mRNA"/>
</dbReference>
<dbReference type="EMBL" id="M76704">
    <property type="protein sequence ID" value="AAA42052.1"/>
    <property type="molecule type" value="mRNA"/>
</dbReference>
<dbReference type="EMBL" id="X54862">
    <property type="protein sequence ID" value="CAA38648.1"/>
    <property type="molecule type" value="mRNA"/>
</dbReference>
<dbReference type="PIR" id="JN0071">
    <property type="entry name" value="XURTMC"/>
</dbReference>
<dbReference type="RefSeq" id="NP_036993.1">
    <property type="nucleotide sequence ID" value="NM_012861.1"/>
</dbReference>
<dbReference type="SMR" id="P24528"/>
<dbReference type="FunCoup" id="P24528">
    <property type="interactions" value="76"/>
</dbReference>
<dbReference type="STRING" id="10116.ENSRNOP00000021537"/>
<dbReference type="iPTMnet" id="P24528"/>
<dbReference type="PhosphoSitePlus" id="P24528"/>
<dbReference type="PaxDb" id="10116-ENSRNOP00000021537"/>
<dbReference type="Ensembl" id="ENSRNOT00000119456.1">
    <property type="protein sequence ID" value="ENSRNOP00000079311.1"/>
    <property type="gene ID" value="ENSRNOG00000016038.7"/>
</dbReference>
<dbReference type="GeneID" id="25332"/>
<dbReference type="KEGG" id="rno:25332"/>
<dbReference type="AGR" id="RGD:3087"/>
<dbReference type="CTD" id="4255"/>
<dbReference type="RGD" id="3087">
    <property type="gene designation" value="Mgmt"/>
</dbReference>
<dbReference type="eggNOG" id="KOG4062">
    <property type="taxonomic scope" value="Eukaryota"/>
</dbReference>
<dbReference type="GeneTree" id="ENSGT00390000015799"/>
<dbReference type="HOGENOM" id="CLU_000445_52_2_1"/>
<dbReference type="InParanoid" id="P24528"/>
<dbReference type="OrthoDB" id="75909at9989"/>
<dbReference type="PhylomeDB" id="P24528"/>
<dbReference type="TreeFam" id="TF314064"/>
<dbReference type="PRO" id="PR:P24528"/>
<dbReference type="Proteomes" id="UP000002494">
    <property type="component" value="Chromosome 1"/>
</dbReference>
<dbReference type="Bgee" id="ENSRNOG00000016038">
    <property type="expression patterns" value="Expressed in pancreas and 18 other cell types or tissues"/>
</dbReference>
<dbReference type="GO" id="GO:0005654">
    <property type="term" value="C:nucleoplasm"/>
    <property type="evidence" value="ECO:0000318"/>
    <property type="project" value="GO_Central"/>
</dbReference>
<dbReference type="GO" id="GO:0005509">
    <property type="term" value="F:calcium ion binding"/>
    <property type="evidence" value="ECO:0000314"/>
    <property type="project" value="RGD"/>
</dbReference>
<dbReference type="GO" id="GO:0003677">
    <property type="term" value="F:DNA binding"/>
    <property type="evidence" value="ECO:0007669"/>
    <property type="project" value="UniProtKB-KW"/>
</dbReference>
<dbReference type="GO" id="GO:0003908">
    <property type="term" value="F:methylated-DNA-[protein]-cysteine S-methyltransferase activity"/>
    <property type="evidence" value="ECO:0000314"/>
    <property type="project" value="RGD"/>
</dbReference>
<dbReference type="GO" id="GO:0008168">
    <property type="term" value="F:methyltransferase activity"/>
    <property type="evidence" value="ECO:0000266"/>
    <property type="project" value="RGD"/>
</dbReference>
<dbReference type="GO" id="GO:0071479">
    <property type="term" value="P:cellular response to ionizing radiation"/>
    <property type="evidence" value="ECO:0000270"/>
    <property type="project" value="RGD"/>
</dbReference>
<dbReference type="GO" id="GO:0034599">
    <property type="term" value="P:cellular response to oxidative stress"/>
    <property type="evidence" value="ECO:0000270"/>
    <property type="project" value="RGD"/>
</dbReference>
<dbReference type="GO" id="GO:0006307">
    <property type="term" value="P:DNA alkylation repair"/>
    <property type="evidence" value="ECO:0000314"/>
    <property type="project" value="RGD"/>
</dbReference>
<dbReference type="GO" id="GO:0006974">
    <property type="term" value="P:DNA damage response"/>
    <property type="evidence" value="ECO:0000270"/>
    <property type="project" value="RGD"/>
</dbReference>
<dbReference type="GO" id="GO:0006281">
    <property type="term" value="P:DNA repair"/>
    <property type="evidence" value="ECO:0000266"/>
    <property type="project" value="RGD"/>
</dbReference>
<dbReference type="GO" id="GO:0060644">
    <property type="term" value="P:mammary gland epithelial cell differentiation"/>
    <property type="evidence" value="ECO:0000270"/>
    <property type="project" value="RGD"/>
</dbReference>
<dbReference type="GO" id="GO:0032259">
    <property type="term" value="P:methylation"/>
    <property type="evidence" value="ECO:0007669"/>
    <property type="project" value="UniProtKB-KW"/>
</dbReference>
<dbReference type="GO" id="GO:0043066">
    <property type="term" value="P:negative regulation of apoptotic process"/>
    <property type="evidence" value="ECO:0000266"/>
    <property type="project" value="RGD"/>
</dbReference>
<dbReference type="GO" id="GO:0045739">
    <property type="term" value="P:positive regulation of DNA repair"/>
    <property type="evidence" value="ECO:0000314"/>
    <property type="project" value="RGD"/>
</dbReference>
<dbReference type="GO" id="GO:2000781">
    <property type="term" value="P:positive regulation of double-strand break repair"/>
    <property type="evidence" value="ECO:0000266"/>
    <property type="project" value="RGD"/>
</dbReference>
<dbReference type="GO" id="GO:0045471">
    <property type="term" value="P:response to ethanol"/>
    <property type="evidence" value="ECO:0000270"/>
    <property type="project" value="RGD"/>
</dbReference>
<dbReference type="GO" id="GO:0051593">
    <property type="term" value="P:response to folic acid"/>
    <property type="evidence" value="ECO:0000270"/>
    <property type="project" value="RGD"/>
</dbReference>
<dbReference type="GO" id="GO:0009636">
    <property type="term" value="P:response to toxic substance"/>
    <property type="evidence" value="ECO:0000270"/>
    <property type="project" value="RGD"/>
</dbReference>
<dbReference type="GO" id="GO:0009410">
    <property type="term" value="P:response to xenobiotic stimulus"/>
    <property type="evidence" value="ECO:0000270"/>
    <property type="project" value="RGD"/>
</dbReference>
<dbReference type="CDD" id="cd06445">
    <property type="entry name" value="ATase"/>
    <property type="match status" value="1"/>
</dbReference>
<dbReference type="FunFam" id="1.10.10.10:FF:000214">
    <property type="entry name" value="Methylated-DNA--protein-cysteine methyltransferase"/>
    <property type="match status" value="1"/>
</dbReference>
<dbReference type="FunFam" id="3.30.160.70:FF:000001">
    <property type="entry name" value="Methylated-DNA--protein-cysteine methyltransferase"/>
    <property type="match status" value="1"/>
</dbReference>
<dbReference type="Gene3D" id="3.30.160.70">
    <property type="entry name" value="Methylated DNA-protein cysteine methyltransferase domain"/>
    <property type="match status" value="1"/>
</dbReference>
<dbReference type="Gene3D" id="1.10.10.10">
    <property type="entry name" value="Winged helix-like DNA-binding domain superfamily/Winged helix DNA-binding domain"/>
    <property type="match status" value="1"/>
</dbReference>
<dbReference type="InterPro" id="IPR001497">
    <property type="entry name" value="MethylDNA_cys_MeTrfase_AS"/>
</dbReference>
<dbReference type="InterPro" id="IPR014048">
    <property type="entry name" value="MethylDNA_cys_MeTrfase_DNA-bd"/>
</dbReference>
<dbReference type="InterPro" id="IPR036217">
    <property type="entry name" value="MethylDNA_cys_MeTrfase_DNAb"/>
</dbReference>
<dbReference type="InterPro" id="IPR008332">
    <property type="entry name" value="MethylG_MeTrfase_N"/>
</dbReference>
<dbReference type="InterPro" id="IPR036631">
    <property type="entry name" value="MGMT_N_sf"/>
</dbReference>
<dbReference type="InterPro" id="IPR036388">
    <property type="entry name" value="WH-like_DNA-bd_sf"/>
</dbReference>
<dbReference type="NCBIfam" id="TIGR00589">
    <property type="entry name" value="ogt"/>
    <property type="match status" value="1"/>
</dbReference>
<dbReference type="PANTHER" id="PTHR46460">
    <property type="entry name" value="METHYLATED-DNA--PROTEIN-CYSTEINE METHYLTRANSFERASE"/>
    <property type="match status" value="1"/>
</dbReference>
<dbReference type="PANTHER" id="PTHR46460:SF1">
    <property type="entry name" value="METHYLATED-DNA--PROTEIN-CYSTEINE METHYLTRANSFERASE"/>
    <property type="match status" value="1"/>
</dbReference>
<dbReference type="Pfam" id="PF01035">
    <property type="entry name" value="DNA_binding_1"/>
    <property type="match status" value="1"/>
</dbReference>
<dbReference type="Pfam" id="PF02870">
    <property type="entry name" value="Methyltransf_1N"/>
    <property type="match status" value="1"/>
</dbReference>
<dbReference type="SUPFAM" id="SSF53155">
    <property type="entry name" value="Methylated DNA-protein cysteine methyltransferase domain"/>
    <property type="match status" value="1"/>
</dbReference>
<dbReference type="SUPFAM" id="SSF46767">
    <property type="entry name" value="Methylated DNA-protein cysteine methyltransferase, C-terminal domain"/>
    <property type="match status" value="1"/>
</dbReference>
<dbReference type="PROSITE" id="PS00374">
    <property type="entry name" value="MGMT"/>
    <property type="match status" value="1"/>
</dbReference>
<keyword id="KW-0903">Direct protein sequencing</keyword>
<keyword id="KW-0227">DNA damage</keyword>
<keyword id="KW-0234">DNA repair</keyword>
<keyword id="KW-0238">DNA-binding</keyword>
<keyword id="KW-0479">Metal-binding</keyword>
<keyword id="KW-0489">Methyltransferase</keyword>
<keyword id="KW-0539">Nucleus</keyword>
<keyword id="KW-0597">Phosphoprotein</keyword>
<keyword id="KW-1185">Reference proteome</keyword>
<keyword id="KW-0808">Transferase</keyword>
<keyword id="KW-0862">Zinc</keyword>
<reference key="1">
    <citation type="journal article" date="1991" name="Biochem. Biophys. Res. Commun.">
        <title>cDNA cloning of the rat O6-methylguanine-DNA-methyltransferase.</title>
        <authorList>
            <person name="Rahden-Staron I."/>
            <person name="Laval F."/>
        </authorList>
    </citation>
    <scope>NUCLEOTIDE SEQUENCE [MRNA]</scope>
</reference>
<reference key="2">
    <citation type="journal article" date="1991" name="Carcinogenesis">
        <title>Isolation and cDNA cloning of a rat O6-alkylguanine-DNA-alkyltransferase gene, molecular analysis of expression in rat liver.</title>
        <authorList>
            <person name="Potter P.M."/>
            <person name="Rafferty J.A."/>
            <person name="Cawkwell L."/>
            <person name="Wilkinson M.C."/>
            <person name="Cooper D.P."/>
            <person name="O'Connor P.J."/>
            <person name="Margison G.P."/>
        </authorList>
    </citation>
    <scope>NUCLEOTIDE SEQUENCE [MRNA]</scope>
    <source>
        <tissue>Liver</tissue>
    </source>
</reference>
<reference key="3">
    <citation type="journal article" date="1993" name="Cancer Res.">
        <title>Ribozyme-mediated modulation of human O6-methylguanine-DNA methyltransferase expression.</title>
        <authorList>
            <person name="Potter P.M."/>
            <person name="Harris L.C."/>
            <person name="Remack J.S."/>
            <person name="Edwards C.C."/>
            <person name="Brent T.P."/>
        </authorList>
    </citation>
    <scope>NUCLEOTIDE SEQUENCE [MRNA]</scope>
</reference>
<reference key="4">
    <citation type="journal article" date="1991" name="Nucleic Acids Res.">
        <title>Cloning and expression of cDNA for rat O6-methylguanine-DNA methyltransferase.</title>
        <authorList>
            <person name="Sakumi K."/>
            <person name="Shiraishi A."/>
            <person name="Hayakawa H."/>
            <person name="Sekiguchi M."/>
        </authorList>
    </citation>
    <scope>NUCLEOTIDE SEQUENCE [MRNA]</scope>
</reference>
<reference key="5">
    <citation type="journal article" date="1994" name="Nucleic Acids Res.">
        <title>Specificities of human, rat and E. coli O6-methylguanine-DNA methyltransferases towards the repair of O6-methyl and O6-ethylguanine in DNA.</title>
        <authorList>
            <person name="Liem L.-K."/>
            <person name="Lim A."/>
            <person name="Li B.F.L."/>
        </authorList>
    </citation>
    <scope>CHARACTERIZATION</scope>
    <scope>PARTIAL PROTEIN SEQUENCE</scope>
</reference>
<organism>
    <name type="scientific">Rattus norvegicus</name>
    <name type="common">Rat</name>
    <dbReference type="NCBI Taxonomy" id="10116"/>
    <lineage>
        <taxon>Eukaryota</taxon>
        <taxon>Metazoa</taxon>
        <taxon>Chordata</taxon>
        <taxon>Craniata</taxon>
        <taxon>Vertebrata</taxon>
        <taxon>Euteleostomi</taxon>
        <taxon>Mammalia</taxon>
        <taxon>Eutheria</taxon>
        <taxon>Euarchontoglires</taxon>
        <taxon>Glires</taxon>
        <taxon>Rodentia</taxon>
        <taxon>Myomorpha</taxon>
        <taxon>Muroidea</taxon>
        <taxon>Muridae</taxon>
        <taxon>Murinae</taxon>
        <taxon>Rattus</taxon>
    </lineage>
</organism>
<evidence type="ECO:0000250" key="1"/>
<evidence type="ECO:0000250" key="2">
    <source>
        <dbReference type="UniProtKB" id="P16455"/>
    </source>
</evidence>
<evidence type="ECO:0000255" key="3">
    <source>
        <dbReference type="PROSITE-ProRule" id="PRU10017"/>
    </source>
</evidence>
<evidence type="ECO:0000305" key="4"/>
<name>MGMT_RAT</name>